<reference key="1">
    <citation type="journal article" date="2002" name="Eur. J. Biochem.">
        <title>Purification and characterization of two secreted purple acid phosphatase isozymes from phosphate-starved tomato (Lycopersicon esculentum) cell cultures.</title>
        <authorList>
            <person name="Bozzo G.G."/>
            <person name="Raghothama K.G."/>
            <person name="Plaxton W.C."/>
        </authorList>
    </citation>
    <scope>PROTEIN SEQUENCE</scope>
    <scope>CATALYTIC ACTIVITY</scope>
    <scope>SUBUNIT</scope>
    <scope>SUBCELLULAR LOCATION</scope>
    <scope>GLYCOSYLATION</scope>
    <source>
        <strain>cv. Moneymaker</strain>
        <tissue>Seed</tissue>
    </source>
</reference>
<comment type="catalytic activity">
    <reaction evidence="1">
        <text>a phosphate monoester + H2O = an alcohol + phosphate</text>
        <dbReference type="Rhea" id="RHEA:15017"/>
        <dbReference type="ChEBI" id="CHEBI:15377"/>
        <dbReference type="ChEBI" id="CHEBI:30879"/>
        <dbReference type="ChEBI" id="CHEBI:43474"/>
        <dbReference type="ChEBI" id="CHEBI:67140"/>
        <dbReference type="EC" id="3.1.3.2"/>
    </reaction>
</comment>
<comment type="subunit">
    <text evidence="1 2">Monomer.</text>
</comment>
<comment type="subcellular location">
    <subcellularLocation>
        <location evidence="1">Secreted</location>
    </subcellularLocation>
</comment>
<comment type="PTM">
    <text evidence="1 2">Glycosylated.</text>
</comment>
<comment type="miscellaneous">
    <text evidence="2">In L.esculentum there are at least two isozymes of purple acid phosphatase.</text>
</comment>
<comment type="similarity">
    <text evidence="2">Belongs to the metallophosphoesterase superfamily. Purple acid phosphatase family.</text>
</comment>
<keyword id="KW-0903">Direct protein sequencing</keyword>
<keyword id="KW-0325">Glycoprotein</keyword>
<keyword id="KW-0378">Hydrolase</keyword>
<keyword id="KW-1185">Reference proteome</keyword>
<keyword id="KW-0964">Secreted</keyword>
<protein>
    <recommendedName>
        <fullName>Purple acid phosphatase isozyme LeSAP2</fullName>
        <ecNumber>3.1.3.2</ecNumber>
    </recommendedName>
</protein>
<dbReference type="EC" id="3.1.3.2"/>
<dbReference type="InParanoid" id="P83379"/>
<dbReference type="BioCyc" id="MetaCyc:MONOMER-15162"/>
<dbReference type="BRENDA" id="3.1.3.2">
    <property type="organism ID" value="3101"/>
</dbReference>
<dbReference type="SABIO-RK" id="P83379"/>
<dbReference type="Proteomes" id="UP000004994">
    <property type="component" value="Unplaced"/>
</dbReference>
<dbReference type="GO" id="GO:0005576">
    <property type="term" value="C:extracellular region"/>
    <property type="evidence" value="ECO:0007669"/>
    <property type="project" value="UniProtKB-SubCell"/>
</dbReference>
<dbReference type="GO" id="GO:0003993">
    <property type="term" value="F:acid phosphatase activity"/>
    <property type="evidence" value="ECO:0007669"/>
    <property type="project" value="UniProtKB-EC"/>
</dbReference>
<name>PPH2_SOLLC</name>
<proteinExistence type="evidence at protein level"/>
<accession>P83379</accession>
<feature type="chain" id="PRO_0000114476" description="Purple acid phosphatase isozyme LeSAP2">
    <location>
        <begin position="1" status="less than"/>
        <end position="7" status="greater than"/>
    </location>
</feature>
<feature type="non-terminal residue" evidence="2">
    <location>
        <position position="1"/>
    </location>
</feature>
<feature type="non-terminal residue" evidence="2">
    <location>
        <position position="7"/>
    </location>
</feature>
<evidence type="ECO:0000269" key="1">
    <source>
    </source>
</evidence>
<evidence type="ECO:0000305" key="2"/>
<organism evidence="2">
    <name type="scientific">Solanum lycopersicum</name>
    <name type="common">Tomato</name>
    <name type="synonym">Lycopersicon esculentum</name>
    <dbReference type="NCBI Taxonomy" id="4081"/>
    <lineage>
        <taxon>Eukaryota</taxon>
        <taxon>Viridiplantae</taxon>
        <taxon>Streptophyta</taxon>
        <taxon>Embryophyta</taxon>
        <taxon>Tracheophyta</taxon>
        <taxon>Spermatophyta</taxon>
        <taxon>Magnoliopsida</taxon>
        <taxon>eudicotyledons</taxon>
        <taxon>Gunneridae</taxon>
        <taxon>Pentapetalae</taxon>
        <taxon>asterids</taxon>
        <taxon>lamiids</taxon>
        <taxon>Solanales</taxon>
        <taxon>Solanaceae</taxon>
        <taxon>Solanoideae</taxon>
        <taxon>Solaneae</taxon>
        <taxon>Solanum</taxon>
        <taxon>Solanum subgen. Lycopersicon</taxon>
    </lineage>
</organism>
<sequence>FLFVGDL</sequence>